<comment type="function">
    <text evidence="1">Succinyl-CoA synthetase functions in the citric acid cycle (TCA), coupling the hydrolysis of succinyl-CoA to the synthesis of either ATP or GTP and thus represents the only step of substrate-level phosphorylation in the TCA. The beta subunit provides nucleotide specificity of the enzyme and binds the substrate succinate, while the binding sites for coenzyme A and phosphate are found in the alpha subunit.</text>
</comment>
<comment type="catalytic activity">
    <reaction evidence="1">
        <text>succinate + ATP + CoA = succinyl-CoA + ADP + phosphate</text>
        <dbReference type="Rhea" id="RHEA:17661"/>
        <dbReference type="ChEBI" id="CHEBI:30031"/>
        <dbReference type="ChEBI" id="CHEBI:30616"/>
        <dbReference type="ChEBI" id="CHEBI:43474"/>
        <dbReference type="ChEBI" id="CHEBI:57287"/>
        <dbReference type="ChEBI" id="CHEBI:57292"/>
        <dbReference type="ChEBI" id="CHEBI:456216"/>
        <dbReference type="EC" id="6.2.1.5"/>
    </reaction>
    <physiologicalReaction direction="right-to-left" evidence="1">
        <dbReference type="Rhea" id="RHEA:17663"/>
    </physiologicalReaction>
</comment>
<comment type="catalytic activity">
    <reaction evidence="1">
        <text>GTP + succinate + CoA = succinyl-CoA + GDP + phosphate</text>
        <dbReference type="Rhea" id="RHEA:22120"/>
        <dbReference type="ChEBI" id="CHEBI:30031"/>
        <dbReference type="ChEBI" id="CHEBI:37565"/>
        <dbReference type="ChEBI" id="CHEBI:43474"/>
        <dbReference type="ChEBI" id="CHEBI:57287"/>
        <dbReference type="ChEBI" id="CHEBI:57292"/>
        <dbReference type="ChEBI" id="CHEBI:58189"/>
    </reaction>
    <physiologicalReaction direction="right-to-left" evidence="1">
        <dbReference type="Rhea" id="RHEA:22122"/>
    </physiologicalReaction>
</comment>
<comment type="cofactor">
    <cofactor evidence="1">
        <name>Mg(2+)</name>
        <dbReference type="ChEBI" id="CHEBI:18420"/>
    </cofactor>
    <text evidence="1">Binds 1 Mg(2+) ion per subunit.</text>
</comment>
<comment type="pathway">
    <text evidence="1">Carbohydrate metabolism; tricarboxylic acid cycle; succinate from succinyl-CoA (ligase route): step 1/1.</text>
</comment>
<comment type="subunit">
    <text evidence="1">Heterotetramer of two alpha and two beta subunits.</text>
</comment>
<comment type="similarity">
    <text evidence="1">Belongs to the succinate/malate CoA ligase beta subunit family.</text>
</comment>
<reference key="1">
    <citation type="submission" date="2007-12" db="EMBL/GenBank/DDBJ databases">
        <title>Brucella suis ATCC 23445 whole genome shotgun sequencing project.</title>
        <authorList>
            <person name="Setubal J.C."/>
            <person name="Bowns C."/>
            <person name="Boyle S."/>
            <person name="Crasta O.R."/>
            <person name="Czar M.J."/>
            <person name="Dharmanolla C."/>
            <person name="Gillespie J.J."/>
            <person name="Kenyon R.W."/>
            <person name="Lu J."/>
            <person name="Mane S."/>
            <person name="Mohapatra S."/>
            <person name="Nagrani S."/>
            <person name="Purkayastha A."/>
            <person name="Rajasimha H.K."/>
            <person name="Shallom J.M."/>
            <person name="Shallom S."/>
            <person name="Shukla M."/>
            <person name="Snyder E.E."/>
            <person name="Sobral B.W."/>
            <person name="Wattam A.R."/>
            <person name="Will R."/>
            <person name="Williams K."/>
            <person name="Yoo H."/>
            <person name="Bruce D."/>
            <person name="Detter C."/>
            <person name="Munk C."/>
            <person name="Brettin T.S."/>
        </authorList>
    </citation>
    <scope>NUCLEOTIDE SEQUENCE [LARGE SCALE GENOMIC DNA]</scope>
    <source>
        <strain>ATCC 23445 / NCTC 10510</strain>
    </source>
</reference>
<proteinExistence type="inferred from homology"/>
<name>SUCC_BRUSI</name>
<evidence type="ECO:0000255" key="1">
    <source>
        <dbReference type="HAMAP-Rule" id="MF_00558"/>
    </source>
</evidence>
<keyword id="KW-0067">ATP-binding</keyword>
<keyword id="KW-0436">Ligase</keyword>
<keyword id="KW-0460">Magnesium</keyword>
<keyword id="KW-0479">Metal-binding</keyword>
<keyword id="KW-0547">Nucleotide-binding</keyword>
<keyword id="KW-0816">Tricarboxylic acid cycle</keyword>
<feature type="chain" id="PRO_1000082034" description="Succinate--CoA ligase [ADP-forming] subunit beta">
    <location>
        <begin position="1"/>
        <end position="398"/>
    </location>
</feature>
<feature type="domain" description="ATP-grasp" evidence="1">
    <location>
        <begin position="9"/>
        <end position="254"/>
    </location>
</feature>
<feature type="binding site" evidence="1">
    <location>
        <position position="46"/>
    </location>
    <ligand>
        <name>ATP</name>
        <dbReference type="ChEBI" id="CHEBI:30616"/>
    </ligand>
</feature>
<feature type="binding site" evidence="1">
    <location>
        <begin position="53"/>
        <end position="55"/>
    </location>
    <ligand>
        <name>ATP</name>
        <dbReference type="ChEBI" id="CHEBI:30616"/>
    </ligand>
</feature>
<feature type="binding site" evidence="1">
    <location>
        <position position="109"/>
    </location>
    <ligand>
        <name>ATP</name>
        <dbReference type="ChEBI" id="CHEBI:30616"/>
    </ligand>
</feature>
<feature type="binding site" evidence="1">
    <location>
        <position position="112"/>
    </location>
    <ligand>
        <name>ATP</name>
        <dbReference type="ChEBI" id="CHEBI:30616"/>
    </ligand>
</feature>
<feature type="binding site" evidence="1">
    <location>
        <position position="117"/>
    </location>
    <ligand>
        <name>ATP</name>
        <dbReference type="ChEBI" id="CHEBI:30616"/>
    </ligand>
</feature>
<feature type="binding site" evidence="1">
    <location>
        <position position="209"/>
    </location>
    <ligand>
        <name>Mg(2+)</name>
        <dbReference type="ChEBI" id="CHEBI:18420"/>
    </ligand>
</feature>
<feature type="binding site" evidence="1">
    <location>
        <position position="223"/>
    </location>
    <ligand>
        <name>Mg(2+)</name>
        <dbReference type="ChEBI" id="CHEBI:18420"/>
    </ligand>
</feature>
<feature type="binding site" evidence="1">
    <location>
        <position position="274"/>
    </location>
    <ligand>
        <name>substrate</name>
        <note>ligand shared with subunit alpha</note>
    </ligand>
</feature>
<feature type="binding site" evidence="1">
    <location>
        <begin position="331"/>
        <end position="333"/>
    </location>
    <ligand>
        <name>substrate</name>
        <note>ligand shared with subunit alpha</note>
    </ligand>
</feature>
<organism>
    <name type="scientific">Brucella suis (strain ATCC 23445 / NCTC 10510)</name>
    <dbReference type="NCBI Taxonomy" id="470137"/>
    <lineage>
        <taxon>Bacteria</taxon>
        <taxon>Pseudomonadati</taxon>
        <taxon>Pseudomonadota</taxon>
        <taxon>Alphaproteobacteria</taxon>
        <taxon>Hyphomicrobiales</taxon>
        <taxon>Brucellaceae</taxon>
        <taxon>Brucella/Ochrobactrum group</taxon>
        <taxon>Brucella</taxon>
    </lineage>
</organism>
<protein>
    <recommendedName>
        <fullName evidence="1">Succinate--CoA ligase [ADP-forming] subunit beta</fullName>
        <ecNumber evidence="1">6.2.1.5</ecNumber>
    </recommendedName>
    <alternativeName>
        <fullName evidence="1">Succinyl-CoA synthetase subunit beta</fullName>
        <shortName evidence="1">SCS-beta</shortName>
    </alternativeName>
</protein>
<sequence length="398" mass="42527">MNIHEYQAKRLLHTYGAPIANGVAVYSVEQAEEWAKTLPGPLYVVKSQIHAGGRGKGKFKELPADAKGGVRLAKSVEEVVANAKEMLGNTLVTKQTGEAGKQVNRLYIEDGADIERELYLSILIDRSVGRPAFVVSTEGGMDIEAVAEETPEKIVTVAIDPAKGVTDEDANKLADALKLEGGAREDGLKLFPILYKAFTEKDMSLLEINPLIVMTNGRVRVLDAKVSFDNNALFRHPDIVELRDLTEEDPKEIEASKYDLAYVALDGNIGCMVNGAGLAMATMDIIKLYGAEPANFLDVGGGASKEKVTAAFKIITADPAVEGILVNIFGGIMKCDVIAEGVIAAVKEVGLKVPLVVRLEGTNVELGKKIINESGLNVISADDLDDAAQKIVAAVKGN</sequence>
<gene>
    <name evidence="1" type="primary">sucC</name>
    <name type="ordered locus">BSUIS_A1766</name>
</gene>
<accession>B0CIT0</accession>
<dbReference type="EC" id="6.2.1.5" evidence="1"/>
<dbReference type="EMBL" id="CP000911">
    <property type="protein sequence ID" value="ABY38783.1"/>
    <property type="molecule type" value="Genomic_DNA"/>
</dbReference>
<dbReference type="RefSeq" id="WP_002964994.1">
    <property type="nucleotide sequence ID" value="NC_010169.1"/>
</dbReference>
<dbReference type="SMR" id="B0CIT0"/>
<dbReference type="GeneID" id="97534788"/>
<dbReference type="KEGG" id="bmt:BSUIS_A1766"/>
<dbReference type="HOGENOM" id="CLU_037430_0_2_5"/>
<dbReference type="UniPathway" id="UPA00223">
    <property type="reaction ID" value="UER00999"/>
</dbReference>
<dbReference type="Proteomes" id="UP000008545">
    <property type="component" value="Chromosome I"/>
</dbReference>
<dbReference type="GO" id="GO:0005829">
    <property type="term" value="C:cytosol"/>
    <property type="evidence" value="ECO:0007669"/>
    <property type="project" value="TreeGrafter"/>
</dbReference>
<dbReference type="GO" id="GO:0042709">
    <property type="term" value="C:succinate-CoA ligase complex"/>
    <property type="evidence" value="ECO:0007669"/>
    <property type="project" value="TreeGrafter"/>
</dbReference>
<dbReference type="GO" id="GO:0005524">
    <property type="term" value="F:ATP binding"/>
    <property type="evidence" value="ECO:0007669"/>
    <property type="project" value="UniProtKB-UniRule"/>
</dbReference>
<dbReference type="GO" id="GO:0000287">
    <property type="term" value="F:magnesium ion binding"/>
    <property type="evidence" value="ECO:0007669"/>
    <property type="project" value="UniProtKB-UniRule"/>
</dbReference>
<dbReference type="GO" id="GO:0004775">
    <property type="term" value="F:succinate-CoA ligase (ADP-forming) activity"/>
    <property type="evidence" value="ECO:0007669"/>
    <property type="project" value="UniProtKB-UniRule"/>
</dbReference>
<dbReference type="GO" id="GO:0004776">
    <property type="term" value="F:succinate-CoA ligase (GDP-forming) activity"/>
    <property type="evidence" value="ECO:0007669"/>
    <property type="project" value="RHEA"/>
</dbReference>
<dbReference type="GO" id="GO:0006104">
    <property type="term" value="P:succinyl-CoA metabolic process"/>
    <property type="evidence" value="ECO:0007669"/>
    <property type="project" value="TreeGrafter"/>
</dbReference>
<dbReference type="GO" id="GO:0006099">
    <property type="term" value="P:tricarboxylic acid cycle"/>
    <property type="evidence" value="ECO:0007669"/>
    <property type="project" value="UniProtKB-UniRule"/>
</dbReference>
<dbReference type="FunFam" id="3.30.1490.20:FF:000002">
    <property type="entry name" value="Succinate--CoA ligase [ADP-forming] subunit beta"/>
    <property type="match status" value="1"/>
</dbReference>
<dbReference type="FunFam" id="3.30.470.20:FF:000002">
    <property type="entry name" value="Succinate--CoA ligase [ADP-forming] subunit beta"/>
    <property type="match status" value="1"/>
</dbReference>
<dbReference type="FunFam" id="3.40.50.261:FF:000001">
    <property type="entry name" value="Succinate--CoA ligase [ADP-forming] subunit beta"/>
    <property type="match status" value="1"/>
</dbReference>
<dbReference type="Gene3D" id="3.30.1490.20">
    <property type="entry name" value="ATP-grasp fold, A domain"/>
    <property type="match status" value="1"/>
</dbReference>
<dbReference type="Gene3D" id="3.30.470.20">
    <property type="entry name" value="ATP-grasp fold, B domain"/>
    <property type="match status" value="1"/>
</dbReference>
<dbReference type="Gene3D" id="3.40.50.261">
    <property type="entry name" value="Succinyl-CoA synthetase domains"/>
    <property type="match status" value="1"/>
</dbReference>
<dbReference type="HAMAP" id="MF_00558">
    <property type="entry name" value="Succ_CoA_beta"/>
    <property type="match status" value="1"/>
</dbReference>
<dbReference type="InterPro" id="IPR011761">
    <property type="entry name" value="ATP-grasp"/>
</dbReference>
<dbReference type="InterPro" id="IPR013650">
    <property type="entry name" value="ATP-grasp_succ-CoA_synth-type"/>
</dbReference>
<dbReference type="InterPro" id="IPR013815">
    <property type="entry name" value="ATP_grasp_subdomain_1"/>
</dbReference>
<dbReference type="InterPro" id="IPR017866">
    <property type="entry name" value="Succ-CoA_synthase_bsu_CS"/>
</dbReference>
<dbReference type="InterPro" id="IPR005811">
    <property type="entry name" value="SUCC_ACL_C"/>
</dbReference>
<dbReference type="InterPro" id="IPR005809">
    <property type="entry name" value="Succ_CoA_ligase-like_bsu"/>
</dbReference>
<dbReference type="InterPro" id="IPR016102">
    <property type="entry name" value="Succinyl-CoA_synth-like"/>
</dbReference>
<dbReference type="NCBIfam" id="NF001913">
    <property type="entry name" value="PRK00696.1"/>
    <property type="match status" value="1"/>
</dbReference>
<dbReference type="NCBIfam" id="TIGR01016">
    <property type="entry name" value="sucCoAbeta"/>
    <property type="match status" value="1"/>
</dbReference>
<dbReference type="PANTHER" id="PTHR11815:SF10">
    <property type="entry name" value="SUCCINATE--COA LIGASE [GDP-FORMING] SUBUNIT BETA, MITOCHONDRIAL"/>
    <property type="match status" value="1"/>
</dbReference>
<dbReference type="PANTHER" id="PTHR11815">
    <property type="entry name" value="SUCCINYL-COA SYNTHETASE BETA CHAIN"/>
    <property type="match status" value="1"/>
</dbReference>
<dbReference type="Pfam" id="PF08442">
    <property type="entry name" value="ATP-grasp_2"/>
    <property type="match status" value="1"/>
</dbReference>
<dbReference type="Pfam" id="PF00549">
    <property type="entry name" value="Ligase_CoA"/>
    <property type="match status" value="1"/>
</dbReference>
<dbReference type="PIRSF" id="PIRSF001554">
    <property type="entry name" value="SucCS_beta"/>
    <property type="match status" value="1"/>
</dbReference>
<dbReference type="SUPFAM" id="SSF56059">
    <property type="entry name" value="Glutathione synthetase ATP-binding domain-like"/>
    <property type="match status" value="1"/>
</dbReference>
<dbReference type="SUPFAM" id="SSF52210">
    <property type="entry name" value="Succinyl-CoA synthetase domains"/>
    <property type="match status" value="1"/>
</dbReference>
<dbReference type="PROSITE" id="PS50975">
    <property type="entry name" value="ATP_GRASP"/>
    <property type="match status" value="1"/>
</dbReference>
<dbReference type="PROSITE" id="PS01217">
    <property type="entry name" value="SUCCINYL_COA_LIG_3"/>
    <property type="match status" value="1"/>
</dbReference>